<feature type="chain" id="PRO_1000004990" description="Peptide chain release factor 2">
    <location>
        <begin position="1"/>
        <end position="363"/>
    </location>
</feature>
<feature type="modified residue" description="N5-methylglutamine" evidence="1">
    <location>
        <position position="251"/>
    </location>
</feature>
<organism>
    <name type="scientific">Helicobacter pylori (strain HPAG1)</name>
    <dbReference type="NCBI Taxonomy" id="357544"/>
    <lineage>
        <taxon>Bacteria</taxon>
        <taxon>Pseudomonadati</taxon>
        <taxon>Campylobacterota</taxon>
        <taxon>Epsilonproteobacteria</taxon>
        <taxon>Campylobacterales</taxon>
        <taxon>Helicobacteraceae</taxon>
        <taxon>Helicobacter</taxon>
    </lineage>
</organism>
<evidence type="ECO:0000255" key="1">
    <source>
        <dbReference type="HAMAP-Rule" id="MF_00094"/>
    </source>
</evidence>
<gene>
    <name evidence="1" type="primary">prfB</name>
    <name type="ordered locus">HPAG1_0167</name>
</gene>
<dbReference type="EMBL" id="CP000241">
    <property type="protein sequence ID" value="ABF84234.1"/>
    <property type="molecule type" value="Genomic_DNA"/>
</dbReference>
<dbReference type="RefSeq" id="WP_000371131.1">
    <property type="nucleotide sequence ID" value="NC_008086.1"/>
</dbReference>
<dbReference type="SMR" id="Q1CUY8"/>
<dbReference type="KEGG" id="hpa:HPAG1_0167"/>
<dbReference type="HOGENOM" id="CLU_036856_6_0_7"/>
<dbReference type="GO" id="GO:0005737">
    <property type="term" value="C:cytoplasm"/>
    <property type="evidence" value="ECO:0007669"/>
    <property type="project" value="UniProtKB-SubCell"/>
</dbReference>
<dbReference type="GO" id="GO:0016149">
    <property type="term" value="F:translation release factor activity, codon specific"/>
    <property type="evidence" value="ECO:0007669"/>
    <property type="project" value="UniProtKB-UniRule"/>
</dbReference>
<dbReference type="FunFam" id="3.30.160.20:FF:000010">
    <property type="entry name" value="Peptide chain release factor 2"/>
    <property type="match status" value="1"/>
</dbReference>
<dbReference type="Gene3D" id="3.30.160.20">
    <property type="match status" value="1"/>
</dbReference>
<dbReference type="Gene3D" id="3.30.70.1660">
    <property type="match status" value="1"/>
</dbReference>
<dbReference type="Gene3D" id="1.20.58.410">
    <property type="entry name" value="Release factor"/>
    <property type="match status" value="1"/>
</dbReference>
<dbReference type="HAMAP" id="MF_00094">
    <property type="entry name" value="Rel_fac_2"/>
    <property type="match status" value="1"/>
</dbReference>
<dbReference type="InterPro" id="IPR005139">
    <property type="entry name" value="PCRF"/>
</dbReference>
<dbReference type="InterPro" id="IPR000352">
    <property type="entry name" value="Pep_chain_release_fac_I"/>
</dbReference>
<dbReference type="InterPro" id="IPR045853">
    <property type="entry name" value="Pep_chain_release_fac_I_sf"/>
</dbReference>
<dbReference type="InterPro" id="IPR004374">
    <property type="entry name" value="PrfB"/>
</dbReference>
<dbReference type="NCBIfam" id="TIGR00020">
    <property type="entry name" value="prfB"/>
    <property type="match status" value="1"/>
</dbReference>
<dbReference type="PANTHER" id="PTHR43116:SF3">
    <property type="entry name" value="CLASS I PEPTIDE CHAIN RELEASE FACTOR"/>
    <property type="match status" value="1"/>
</dbReference>
<dbReference type="PANTHER" id="PTHR43116">
    <property type="entry name" value="PEPTIDE CHAIN RELEASE FACTOR 2"/>
    <property type="match status" value="1"/>
</dbReference>
<dbReference type="Pfam" id="PF03462">
    <property type="entry name" value="PCRF"/>
    <property type="match status" value="1"/>
</dbReference>
<dbReference type="Pfam" id="PF00472">
    <property type="entry name" value="RF-1"/>
    <property type="match status" value="1"/>
</dbReference>
<dbReference type="SMART" id="SM00937">
    <property type="entry name" value="PCRF"/>
    <property type="match status" value="1"/>
</dbReference>
<dbReference type="SUPFAM" id="SSF75620">
    <property type="entry name" value="Release factor"/>
    <property type="match status" value="1"/>
</dbReference>
<dbReference type="PROSITE" id="PS00745">
    <property type="entry name" value="RF_PROK_I"/>
    <property type="match status" value="1"/>
</dbReference>
<name>RF2_HELPH</name>
<accession>Q1CUY8</accession>
<comment type="function">
    <text evidence="1">Peptide chain release factor 2 directs the termination of translation in response to the peptide chain termination codons UGA and UAA.</text>
</comment>
<comment type="subcellular location">
    <subcellularLocation>
        <location evidence="1">Cytoplasm</location>
    </subcellularLocation>
</comment>
<comment type="PTM">
    <text evidence="1">Methylated by PrmC. Methylation increases the termination efficiency of RF2.</text>
</comment>
<comment type="similarity">
    <text evidence="1">Belongs to the prokaryotic/mitochondrial release factor family.</text>
</comment>
<keyword id="KW-0963">Cytoplasm</keyword>
<keyword id="KW-0488">Methylation</keyword>
<keyword id="KW-0648">Protein biosynthesis</keyword>
<proteinExistence type="inferred from homology"/>
<sequence>MDNYTYSELLKSLQNKCDNIALIIKPEKIKQELERIEKEQEDPNFWQDVLKARDTNKEKVRLNRLLETYQKTKNSLDESVELFELAQNDNDEVTLSLLYEEAPTLEHSVQKVEIEIMLSGENDASNAIITIQPGAGGTESQDWASILYRMYLRWAERRGFKSEILDYQDGEEAGIKGVAFIIKGENAYGYLKNENGVHRLVRISPFDANAKRHTSFASVQISPELDDDIDIEIDEKDVRYDYYRASGAGGQHVNKTESAVRITHFPTGIVVQCQNDRSQHKNKASALKMLKSKLYELELEKQQSSAKNEEKSEIGWGHQIRSYVLAPYQQVKDARSNIAYSNVEAILDGDIDAILEGVLIAKA</sequence>
<reference key="1">
    <citation type="journal article" date="2006" name="Proc. Natl. Acad. Sci. U.S.A.">
        <title>The complete genome sequence of a chronic atrophic gastritis Helicobacter pylori strain: evolution during disease progression.</title>
        <authorList>
            <person name="Oh J.D."/>
            <person name="Kling-Baeckhed H."/>
            <person name="Giannakis M."/>
            <person name="Xu J."/>
            <person name="Fulton R.S."/>
            <person name="Fulton L.A."/>
            <person name="Cordum H.S."/>
            <person name="Wang C."/>
            <person name="Elliott G."/>
            <person name="Edwards J."/>
            <person name="Mardis E.R."/>
            <person name="Engstrand L.G."/>
            <person name="Gordon J.I."/>
        </authorList>
    </citation>
    <scope>NUCLEOTIDE SEQUENCE [LARGE SCALE GENOMIC DNA]</scope>
    <source>
        <strain>HPAG1</strain>
    </source>
</reference>
<protein>
    <recommendedName>
        <fullName evidence="1">Peptide chain release factor 2</fullName>
        <shortName evidence="1">RF-2</shortName>
    </recommendedName>
</protein>